<name>RS16_YERPB</name>
<comment type="similarity">
    <text evidence="1">Belongs to the bacterial ribosomal protein bS16 family.</text>
</comment>
<protein>
    <recommendedName>
        <fullName evidence="1">Small ribosomal subunit protein bS16</fullName>
    </recommendedName>
    <alternativeName>
        <fullName evidence="2">30S ribosomal protein S16</fullName>
    </alternativeName>
</protein>
<proteinExistence type="inferred from homology"/>
<accession>B2K5Y8</accession>
<organism>
    <name type="scientific">Yersinia pseudotuberculosis serotype IB (strain PB1/+)</name>
    <dbReference type="NCBI Taxonomy" id="502801"/>
    <lineage>
        <taxon>Bacteria</taxon>
        <taxon>Pseudomonadati</taxon>
        <taxon>Pseudomonadota</taxon>
        <taxon>Gammaproteobacteria</taxon>
        <taxon>Enterobacterales</taxon>
        <taxon>Yersiniaceae</taxon>
        <taxon>Yersinia</taxon>
    </lineage>
</organism>
<gene>
    <name evidence="1" type="primary">rpsP</name>
    <name type="ordered locus">YPTS_0870</name>
</gene>
<reference key="1">
    <citation type="submission" date="2008-04" db="EMBL/GenBank/DDBJ databases">
        <title>Complete sequence of Yersinia pseudotuberculosis PB1/+.</title>
        <authorList>
            <person name="Copeland A."/>
            <person name="Lucas S."/>
            <person name="Lapidus A."/>
            <person name="Glavina del Rio T."/>
            <person name="Dalin E."/>
            <person name="Tice H."/>
            <person name="Bruce D."/>
            <person name="Goodwin L."/>
            <person name="Pitluck S."/>
            <person name="Munk A.C."/>
            <person name="Brettin T."/>
            <person name="Detter J.C."/>
            <person name="Han C."/>
            <person name="Tapia R."/>
            <person name="Schmutz J."/>
            <person name="Larimer F."/>
            <person name="Land M."/>
            <person name="Hauser L."/>
            <person name="Challacombe J.F."/>
            <person name="Green L."/>
            <person name="Lindler L.E."/>
            <person name="Nikolich M.P."/>
            <person name="Richardson P."/>
        </authorList>
    </citation>
    <scope>NUCLEOTIDE SEQUENCE [LARGE SCALE GENOMIC DNA]</scope>
    <source>
        <strain>PB1/+</strain>
    </source>
</reference>
<dbReference type="EMBL" id="CP001048">
    <property type="protein sequence ID" value="ACC87854.1"/>
    <property type="molecule type" value="Genomic_DNA"/>
</dbReference>
<dbReference type="RefSeq" id="WP_002209458.1">
    <property type="nucleotide sequence ID" value="NZ_CP009780.1"/>
</dbReference>
<dbReference type="SMR" id="B2K5Y8"/>
<dbReference type="GeneID" id="96664341"/>
<dbReference type="KEGG" id="ypb:YPTS_0870"/>
<dbReference type="PATRIC" id="fig|502801.10.peg.204"/>
<dbReference type="GO" id="GO:0005737">
    <property type="term" value="C:cytoplasm"/>
    <property type="evidence" value="ECO:0007669"/>
    <property type="project" value="UniProtKB-ARBA"/>
</dbReference>
<dbReference type="GO" id="GO:0015935">
    <property type="term" value="C:small ribosomal subunit"/>
    <property type="evidence" value="ECO:0007669"/>
    <property type="project" value="TreeGrafter"/>
</dbReference>
<dbReference type="GO" id="GO:0003735">
    <property type="term" value="F:structural constituent of ribosome"/>
    <property type="evidence" value="ECO:0007669"/>
    <property type="project" value="InterPro"/>
</dbReference>
<dbReference type="GO" id="GO:0006412">
    <property type="term" value="P:translation"/>
    <property type="evidence" value="ECO:0007669"/>
    <property type="project" value="UniProtKB-UniRule"/>
</dbReference>
<dbReference type="FunFam" id="3.30.1320.10:FF:000001">
    <property type="entry name" value="30S ribosomal protein S16"/>
    <property type="match status" value="1"/>
</dbReference>
<dbReference type="Gene3D" id="3.30.1320.10">
    <property type="match status" value="1"/>
</dbReference>
<dbReference type="HAMAP" id="MF_00385">
    <property type="entry name" value="Ribosomal_bS16"/>
    <property type="match status" value="1"/>
</dbReference>
<dbReference type="InterPro" id="IPR000307">
    <property type="entry name" value="Ribosomal_bS16"/>
</dbReference>
<dbReference type="InterPro" id="IPR020592">
    <property type="entry name" value="Ribosomal_bS16_CS"/>
</dbReference>
<dbReference type="InterPro" id="IPR023803">
    <property type="entry name" value="Ribosomal_bS16_dom_sf"/>
</dbReference>
<dbReference type="NCBIfam" id="TIGR00002">
    <property type="entry name" value="S16"/>
    <property type="match status" value="1"/>
</dbReference>
<dbReference type="PANTHER" id="PTHR12919">
    <property type="entry name" value="30S RIBOSOMAL PROTEIN S16"/>
    <property type="match status" value="1"/>
</dbReference>
<dbReference type="PANTHER" id="PTHR12919:SF20">
    <property type="entry name" value="SMALL RIBOSOMAL SUBUNIT PROTEIN BS16M"/>
    <property type="match status" value="1"/>
</dbReference>
<dbReference type="Pfam" id="PF00886">
    <property type="entry name" value="Ribosomal_S16"/>
    <property type="match status" value="1"/>
</dbReference>
<dbReference type="SUPFAM" id="SSF54565">
    <property type="entry name" value="Ribosomal protein S16"/>
    <property type="match status" value="1"/>
</dbReference>
<dbReference type="PROSITE" id="PS00732">
    <property type="entry name" value="RIBOSOMAL_S16"/>
    <property type="match status" value="1"/>
</dbReference>
<feature type="chain" id="PRO_1000122603" description="Small ribosomal subunit protein bS16">
    <location>
        <begin position="1"/>
        <end position="82"/>
    </location>
</feature>
<evidence type="ECO:0000255" key="1">
    <source>
        <dbReference type="HAMAP-Rule" id="MF_00385"/>
    </source>
</evidence>
<evidence type="ECO:0000305" key="2"/>
<sequence length="82" mass="9097">MVTIRLARGGAKKRPFYQVVVTDSRNARDGRFIERVGFFNPIASGQAEALRLDLDRIEHWIGLGATVSDRVSVLIKDAKKAA</sequence>
<keyword id="KW-0687">Ribonucleoprotein</keyword>
<keyword id="KW-0689">Ribosomal protein</keyword>